<feature type="chain" id="PRO_1000047594" description="Glutamate racemase">
    <location>
        <begin position="1"/>
        <end position="265"/>
    </location>
</feature>
<feature type="active site" description="Proton donor/acceptor" evidence="1">
    <location>
        <position position="73"/>
    </location>
</feature>
<feature type="active site" description="Proton donor/acceptor" evidence="1">
    <location>
        <position position="184"/>
    </location>
</feature>
<feature type="binding site" evidence="1">
    <location>
        <begin position="10"/>
        <end position="11"/>
    </location>
    <ligand>
        <name>substrate</name>
    </ligand>
</feature>
<feature type="binding site" evidence="1">
    <location>
        <begin position="42"/>
        <end position="43"/>
    </location>
    <ligand>
        <name>substrate</name>
    </ligand>
</feature>
<feature type="binding site" evidence="1">
    <location>
        <begin position="74"/>
        <end position="75"/>
    </location>
    <ligand>
        <name>substrate</name>
    </ligand>
</feature>
<feature type="binding site" evidence="1">
    <location>
        <begin position="185"/>
        <end position="186"/>
    </location>
    <ligand>
        <name>substrate</name>
    </ligand>
</feature>
<sequence>MDNRPIGFMDSGVGGLTVVKTAQKLLPNEEIIFIGDEARMPYGPRPTAEVVEFSRQMASFLMTKNIKALVIACNTATNAALAVLQAELPIPVIGVILPGAIAANRQTKNQKIGVIATLGTIKSEAYPKALAEINTKLRAYPVACQEFVEIAEKNELHTTAAQKVMNEKLAEFRQDQIDTLILGCTHFPLLEEGIQAAVGPDVTLVDPGVETVHQLIEILTKQALQHAEGPKAQDQYYSTGNIKNFEEIARTFLNQDLRVEEVKID</sequence>
<protein>
    <recommendedName>
        <fullName evidence="1">Glutamate racemase</fullName>
        <ecNumber evidence="1">5.1.1.3</ecNumber>
    </recommendedName>
</protein>
<evidence type="ECO:0000255" key="1">
    <source>
        <dbReference type="HAMAP-Rule" id="MF_00258"/>
    </source>
</evidence>
<reference key="1">
    <citation type="journal article" date="2006" name="Proc. Natl. Acad. Sci. U.S.A.">
        <title>Comparative genomics of the lactic acid bacteria.</title>
        <authorList>
            <person name="Makarova K.S."/>
            <person name="Slesarev A."/>
            <person name="Wolf Y.I."/>
            <person name="Sorokin A."/>
            <person name="Mirkin B."/>
            <person name="Koonin E.V."/>
            <person name="Pavlov A."/>
            <person name="Pavlova N."/>
            <person name="Karamychev V."/>
            <person name="Polouchine N."/>
            <person name="Shakhova V."/>
            <person name="Grigoriev I."/>
            <person name="Lou Y."/>
            <person name="Rohksar D."/>
            <person name="Lucas S."/>
            <person name="Huang K."/>
            <person name="Goodstein D.M."/>
            <person name="Hawkins T."/>
            <person name="Plengvidhya V."/>
            <person name="Welker D."/>
            <person name="Hughes J."/>
            <person name="Goh Y."/>
            <person name="Benson A."/>
            <person name="Baldwin K."/>
            <person name="Lee J.-H."/>
            <person name="Diaz-Muniz I."/>
            <person name="Dosti B."/>
            <person name="Smeianov V."/>
            <person name="Wechter W."/>
            <person name="Barabote R."/>
            <person name="Lorca G."/>
            <person name="Altermann E."/>
            <person name="Barrangou R."/>
            <person name="Ganesan B."/>
            <person name="Xie Y."/>
            <person name="Rawsthorne H."/>
            <person name="Tamir D."/>
            <person name="Parker C."/>
            <person name="Breidt F."/>
            <person name="Broadbent J.R."/>
            <person name="Hutkins R."/>
            <person name="O'Sullivan D."/>
            <person name="Steele J."/>
            <person name="Unlu G."/>
            <person name="Saier M.H. Jr."/>
            <person name="Klaenhammer T."/>
            <person name="Richardson P."/>
            <person name="Kozyavkin S."/>
            <person name="Weimer B.C."/>
            <person name="Mills D.A."/>
        </authorList>
    </citation>
    <scope>NUCLEOTIDE SEQUENCE [LARGE SCALE GENOMIC DNA]</scope>
    <source>
        <strain>ATCC 25745 / CCUG 21536 / LMG 10740 / 183-1w</strain>
    </source>
</reference>
<accession>Q03ES4</accession>
<proteinExistence type="inferred from homology"/>
<name>MURI_PEDPA</name>
<organism>
    <name type="scientific">Pediococcus pentosaceus (strain ATCC 25745 / CCUG 21536 / LMG 10740 / 183-1w)</name>
    <dbReference type="NCBI Taxonomy" id="278197"/>
    <lineage>
        <taxon>Bacteria</taxon>
        <taxon>Bacillati</taxon>
        <taxon>Bacillota</taxon>
        <taxon>Bacilli</taxon>
        <taxon>Lactobacillales</taxon>
        <taxon>Lactobacillaceae</taxon>
        <taxon>Pediococcus</taxon>
    </lineage>
</organism>
<comment type="function">
    <text evidence="1">Provides the (R)-glutamate required for cell wall biosynthesis.</text>
</comment>
<comment type="catalytic activity">
    <reaction evidence="1">
        <text>L-glutamate = D-glutamate</text>
        <dbReference type="Rhea" id="RHEA:12813"/>
        <dbReference type="ChEBI" id="CHEBI:29985"/>
        <dbReference type="ChEBI" id="CHEBI:29986"/>
        <dbReference type="EC" id="5.1.1.3"/>
    </reaction>
</comment>
<comment type="pathway">
    <text evidence="1">Cell wall biogenesis; peptidoglycan biosynthesis.</text>
</comment>
<comment type="similarity">
    <text evidence="1">Belongs to the aspartate/glutamate racemases family.</text>
</comment>
<keyword id="KW-0133">Cell shape</keyword>
<keyword id="KW-0961">Cell wall biogenesis/degradation</keyword>
<keyword id="KW-0413">Isomerase</keyword>
<keyword id="KW-0573">Peptidoglycan synthesis</keyword>
<gene>
    <name evidence="1" type="primary">murI</name>
    <name type="ordered locus">PEPE_1257</name>
</gene>
<dbReference type="EC" id="5.1.1.3" evidence="1"/>
<dbReference type="EMBL" id="CP000422">
    <property type="protein sequence ID" value="ABJ68298.1"/>
    <property type="molecule type" value="Genomic_DNA"/>
</dbReference>
<dbReference type="RefSeq" id="WP_011673575.1">
    <property type="nucleotide sequence ID" value="NC_008525.1"/>
</dbReference>
<dbReference type="SMR" id="Q03ES4"/>
<dbReference type="STRING" id="278197.PEPE_1257"/>
<dbReference type="GeneID" id="33061810"/>
<dbReference type="KEGG" id="ppe:PEPE_1257"/>
<dbReference type="eggNOG" id="COG0796">
    <property type="taxonomic scope" value="Bacteria"/>
</dbReference>
<dbReference type="HOGENOM" id="CLU_052344_0_2_9"/>
<dbReference type="OrthoDB" id="9801055at2"/>
<dbReference type="UniPathway" id="UPA00219"/>
<dbReference type="Proteomes" id="UP000000773">
    <property type="component" value="Chromosome"/>
</dbReference>
<dbReference type="GO" id="GO:0008881">
    <property type="term" value="F:glutamate racemase activity"/>
    <property type="evidence" value="ECO:0007669"/>
    <property type="project" value="UniProtKB-UniRule"/>
</dbReference>
<dbReference type="GO" id="GO:0071555">
    <property type="term" value="P:cell wall organization"/>
    <property type="evidence" value="ECO:0007669"/>
    <property type="project" value="UniProtKB-KW"/>
</dbReference>
<dbReference type="GO" id="GO:0009252">
    <property type="term" value="P:peptidoglycan biosynthetic process"/>
    <property type="evidence" value="ECO:0007669"/>
    <property type="project" value="UniProtKB-UniRule"/>
</dbReference>
<dbReference type="GO" id="GO:0008360">
    <property type="term" value="P:regulation of cell shape"/>
    <property type="evidence" value="ECO:0007669"/>
    <property type="project" value="UniProtKB-KW"/>
</dbReference>
<dbReference type="FunFam" id="3.40.50.1860:FF:000002">
    <property type="entry name" value="Glutamate racemase"/>
    <property type="match status" value="1"/>
</dbReference>
<dbReference type="Gene3D" id="3.40.50.1860">
    <property type="match status" value="2"/>
</dbReference>
<dbReference type="HAMAP" id="MF_00258">
    <property type="entry name" value="Glu_racemase"/>
    <property type="match status" value="1"/>
</dbReference>
<dbReference type="InterPro" id="IPR015942">
    <property type="entry name" value="Asp/Glu/hydantoin_racemase"/>
</dbReference>
<dbReference type="InterPro" id="IPR001920">
    <property type="entry name" value="Asp/Glu_race"/>
</dbReference>
<dbReference type="InterPro" id="IPR018187">
    <property type="entry name" value="Asp/Glu_racemase_AS_1"/>
</dbReference>
<dbReference type="InterPro" id="IPR033134">
    <property type="entry name" value="Asp/Glu_racemase_AS_2"/>
</dbReference>
<dbReference type="InterPro" id="IPR004391">
    <property type="entry name" value="Glu_race"/>
</dbReference>
<dbReference type="NCBIfam" id="TIGR00067">
    <property type="entry name" value="glut_race"/>
    <property type="match status" value="1"/>
</dbReference>
<dbReference type="PANTHER" id="PTHR21198">
    <property type="entry name" value="GLUTAMATE RACEMASE"/>
    <property type="match status" value="1"/>
</dbReference>
<dbReference type="PANTHER" id="PTHR21198:SF2">
    <property type="entry name" value="GLUTAMATE RACEMASE"/>
    <property type="match status" value="1"/>
</dbReference>
<dbReference type="Pfam" id="PF01177">
    <property type="entry name" value="Asp_Glu_race"/>
    <property type="match status" value="1"/>
</dbReference>
<dbReference type="SUPFAM" id="SSF53681">
    <property type="entry name" value="Aspartate/glutamate racemase"/>
    <property type="match status" value="2"/>
</dbReference>
<dbReference type="PROSITE" id="PS00923">
    <property type="entry name" value="ASP_GLU_RACEMASE_1"/>
    <property type="match status" value="1"/>
</dbReference>
<dbReference type="PROSITE" id="PS00924">
    <property type="entry name" value="ASP_GLU_RACEMASE_2"/>
    <property type="match status" value="1"/>
</dbReference>